<name>RPOC_SHEB9</name>
<comment type="function">
    <text evidence="1">DNA-dependent RNA polymerase catalyzes the transcription of DNA into RNA using the four ribonucleoside triphosphates as substrates.</text>
</comment>
<comment type="catalytic activity">
    <reaction evidence="1">
        <text>RNA(n) + a ribonucleoside 5'-triphosphate = RNA(n+1) + diphosphate</text>
        <dbReference type="Rhea" id="RHEA:21248"/>
        <dbReference type="Rhea" id="RHEA-COMP:14527"/>
        <dbReference type="Rhea" id="RHEA-COMP:17342"/>
        <dbReference type="ChEBI" id="CHEBI:33019"/>
        <dbReference type="ChEBI" id="CHEBI:61557"/>
        <dbReference type="ChEBI" id="CHEBI:140395"/>
        <dbReference type="EC" id="2.7.7.6"/>
    </reaction>
</comment>
<comment type="cofactor">
    <cofactor evidence="1">
        <name>Mg(2+)</name>
        <dbReference type="ChEBI" id="CHEBI:18420"/>
    </cofactor>
    <text evidence="1">Binds 1 Mg(2+) ion per subunit.</text>
</comment>
<comment type="cofactor">
    <cofactor evidence="1">
        <name>Zn(2+)</name>
        <dbReference type="ChEBI" id="CHEBI:29105"/>
    </cofactor>
    <text evidence="1">Binds 2 Zn(2+) ions per subunit.</text>
</comment>
<comment type="subunit">
    <text evidence="1">The RNAP catalytic core consists of 2 alpha, 1 beta, 1 beta' and 1 omega subunit. When a sigma factor is associated with the core the holoenzyme is formed, which can initiate transcription.</text>
</comment>
<comment type="similarity">
    <text evidence="1">Belongs to the RNA polymerase beta' chain family.</text>
</comment>
<feature type="chain" id="PRO_1000086414" description="DNA-directed RNA polymerase subunit beta'">
    <location>
        <begin position="1"/>
        <end position="1405"/>
    </location>
</feature>
<feature type="binding site" evidence="1">
    <location>
        <position position="70"/>
    </location>
    <ligand>
        <name>Zn(2+)</name>
        <dbReference type="ChEBI" id="CHEBI:29105"/>
        <label>1</label>
    </ligand>
</feature>
<feature type="binding site" evidence="1">
    <location>
        <position position="72"/>
    </location>
    <ligand>
        <name>Zn(2+)</name>
        <dbReference type="ChEBI" id="CHEBI:29105"/>
        <label>1</label>
    </ligand>
</feature>
<feature type="binding site" evidence="1">
    <location>
        <position position="85"/>
    </location>
    <ligand>
        <name>Zn(2+)</name>
        <dbReference type="ChEBI" id="CHEBI:29105"/>
        <label>1</label>
    </ligand>
</feature>
<feature type="binding site" evidence="1">
    <location>
        <position position="88"/>
    </location>
    <ligand>
        <name>Zn(2+)</name>
        <dbReference type="ChEBI" id="CHEBI:29105"/>
        <label>1</label>
    </ligand>
</feature>
<feature type="binding site" evidence="1">
    <location>
        <position position="460"/>
    </location>
    <ligand>
        <name>Mg(2+)</name>
        <dbReference type="ChEBI" id="CHEBI:18420"/>
    </ligand>
</feature>
<feature type="binding site" evidence="1">
    <location>
        <position position="462"/>
    </location>
    <ligand>
        <name>Mg(2+)</name>
        <dbReference type="ChEBI" id="CHEBI:18420"/>
    </ligand>
</feature>
<feature type="binding site" evidence="1">
    <location>
        <position position="464"/>
    </location>
    <ligand>
        <name>Mg(2+)</name>
        <dbReference type="ChEBI" id="CHEBI:18420"/>
    </ligand>
</feature>
<feature type="binding site" evidence="1">
    <location>
        <position position="814"/>
    </location>
    <ligand>
        <name>Zn(2+)</name>
        <dbReference type="ChEBI" id="CHEBI:29105"/>
        <label>2</label>
    </ligand>
</feature>
<feature type="binding site" evidence="1">
    <location>
        <position position="888"/>
    </location>
    <ligand>
        <name>Zn(2+)</name>
        <dbReference type="ChEBI" id="CHEBI:29105"/>
        <label>2</label>
    </ligand>
</feature>
<feature type="binding site" evidence="1">
    <location>
        <position position="895"/>
    </location>
    <ligand>
        <name>Zn(2+)</name>
        <dbReference type="ChEBI" id="CHEBI:29105"/>
        <label>2</label>
    </ligand>
</feature>
<feature type="binding site" evidence="1">
    <location>
        <position position="898"/>
    </location>
    <ligand>
        <name>Zn(2+)</name>
        <dbReference type="ChEBI" id="CHEBI:29105"/>
        <label>2</label>
    </ligand>
</feature>
<evidence type="ECO:0000255" key="1">
    <source>
        <dbReference type="HAMAP-Rule" id="MF_01322"/>
    </source>
</evidence>
<protein>
    <recommendedName>
        <fullName evidence="1">DNA-directed RNA polymerase subunit beta'</fullName>
        <shortName evidence="1">RNAP subunit beta'</shortName>
        <ecNumber evidence="1">2.7.7.6</ecNumber>
    </recommendedName>
    <alternativeName>
        <fullName evidence="1">RNA polymerase subunit beta'</fullName>
    </alternativeName>
    <alternativeName>
        <fullName evidence="1">Transcriptase subunit beta'</fullName>
    </alternativeName>
</protein>
<accession>A9KW96</accession>
<dbReference type="EC" id="2.7.7.6" evidence="1"/>
<dbReference type="EMBL" id="CP000891">
    <property type="protein sequence ID" value="ABX47376.1"/>
    <property type="molecule type" value="Genomic_DNA"/>
</dbReference>
<dbReference type="RefSeq" id="WP_006083606.1">
    <property type="nucleotide sequence ID" value="NC_009997.1"/>
</dbReference>
<dbReference type="SMR" id="A9KW96"/>
<dbReference type="GeneID" id="11774507"/>
<dbReference type="KEGG" id="sbn:Sbal195_0194"/>
<dbReference type="HOGENOM" id="CLU_000524_3_1_6"/>
<dbReference type="Proteomes" id="UP000000770">
    <property type="component" value="Chromosome"/>
</dbReference>
<dbReference type="GO" id="GO:0000428">
    <property type="term" value="C:DNA-directed RNA polymerase complex"/>
    <property type="evidence" value="ECO:0007669"/>
    <property type="project" value="UniProtKB-KW"/>
</dbReference>
<dbReference type="GO" id="GO:0003677">
    <property type="term" value="F:DNA binding"/>
    <property type="evidence" value="ECO:0007669"/>
    <property type="project" value="UniProtKB-UniRule"/>
</dbReference>
<dbReference type="GO" id="GO:0003899">
    <property type="term" value="F:DNA-directed RNA polymerase activity"/>
    <property type="evidence" value="ECO:0007669"/>
    <property type="project" value="UniProtKB-UniRule"/>
</dbReference>
<dbReference type="GO" id="GO:0000287">
    <property type="term" value="F:magnesium ion binding"/>
    <property type="evidence" value="ECO:0007669"/>
    <property type="project" value="UniProtKB-UniRule"/>
</dbReference>
<dbReference type="GO" id="GO:0008270">
    <property type="term" value="F:zinc ion binding"/>
    <property type="evidence" value="ECO:0007669"/>
    <property type="project" value="UniProtKB-UniRule"/>
</dbReference>
<dbReference type="GO" id="GO:0006351">
    <property type="term" value="P:DNA-templated transcription"/>
    <property type="evidence" value="ECO:0007669"/>
    <property type="project" value="UniProtKB-UniRule"/>
</dbReference>
<dbReference type="CDD" id="cd02655">
    <property type="entry name" value="RNAP_beta'_C"/>
    <property type="match status" value="1"/>
</dbReference>
<dbReference type="CDD" id="cd01609">
    <property type="entry name" value="RNAP_beta'_N"/>
    <property type="match status" value="1"/>
</dbReference>
<dbReference type="FunFam" id="1.10.132.30:FF:000003">
    <property type="entry name" value="DNA-directed RNA polymerase subunit beta"/>
    <property type="match status" value="1"/>
</dbReference>
<dbReference type="FunFam" id="1.10.150.390:FF:000002">
    <property type="entry name" value="DNA-directed RNA polymerase subunit beta"/>
    <property type="match status" value="1"/>
</dbReference>
<dbReference type="FunFam" id="1.10.40.90:FF:000001">
    <property type="entry name" value="DNA-directed RNA polymerase subunit beta"/>
    <property type="match status" value="1"/>
</dbReference>
<dbReference type="FunFam" id="4.10.860.120:FF:000001">
    <property type="entry name" value="DNA-directed RNA polymerase subunit beta"/>
    <property type="match status" value="1"/>
</dbReference>
<dbReference type="Gene3D" id="1.10.132.30">
    <property type="match status" value="1"/>
</dbReference>
<dbReference type="Gene3D" id="1.10.150.390">
    <property type="match status" value="1"/>
</dbReference>
<dbReference type="Gene3D" id="1.10.1790.20">
    <property type="match status" value="1"/>
</dbReference>
<dbReference type="Gene3D" id="1.10.40.90">
    <property type="match status" value="1"/>
</dbReference>
<dbReference type="Gene3D" id="2.40.40.20">
    <property type="match status" value="1"/>
</dbReference>
<dbReference type="Gene3D" id="2.40.50.100">
    <property type="match status" value="3"/>
</dbReference>
<dbReference type="Gene3D" id="4.10.860.120">
    <property type="entry name" value="RNA polymerase II, clamp domain"/>
    <property type="match status" value="1"/>
</dbReference>
<dbReference type="Gene3D" id="1.10.274.100">
    <property type="entry name" value="RNA polymerase Rpb1, domain 3"/>
    <property type="match status" value="1"/>
</dbReference>
<dbReference type="HAMAP" id="MF_01322">
    <property type="entry name" value="RNApol_bact_RpoC"/>
    <property type="match status" value="1"/>
</dbReference>
<dbReference type="InterPro" id="IPR045867">
    <property type="entry name" value="DNA-dir_RpoC_beta_prime"/>
</dbReference>
<dbReference type="InterPro" id="IPR012754">
    <property type="entry name" value="DNA-dir_RpoC_beta_prime_bact"/>
</dbReference>
<dbReference type="InterPro" id="IPR000722">
    <property type="entry name" value="RNA_pol_asu"/>
</dbReference>
<dbReference type="InterPro" id="IPR006592">
    <property type="entry name" value="RNA_pol_N"/>
</dbReference>
<dbReference type="InterPro" id="IPR007080">
    <property type="entry name" value="RNA_pol_Rpb1_1"/>
</dbReference>
<dbReference type="InterPro" id="IPR007066">
    <property type="entry name" value="RNA_pol_Rpb1_3"/>
</dbReference>
<dbReference type="InterPro" id="IPR042102">
    <property type="entry name" value="RNA_pol_Rpb1_3_sf"/>
</dbReference>
<dbReference type="InterPro" id="IPR007083">
    <property type="entry name" value="RNA_pol_Rpb1_4"/>
</dbReference>
<dbReference type="InterPro" id="IPR007081">
    <property type="entry name" value="RNA_pol_Rpb1_5"/>
</dbReference>
<dbReference type="InterPro" id="IPR044893">
    <property type="entry name" value="RNA_pol_Rpb1_clamp_domain"/>
</dbReference>
<dbReference type="InterPro" id="IPR038120">
    <property type="entry name" value="Rpb1_funnel_sf"/>
</dbReference>
<dbReference type="NCBIfam" id="TIGR02386">
    <property type="entry name" value="rpoC_TIGR"/>
    <property type="match status" value="1"/>
</dbReference>
<dbReference type="PANTHER" id="PTHR19376">
    <property type="entry name" value="DNA-DIRECTED RNA POLYMERASE"/>
    <property type="match status" value="1"/>
</dbReference>
<dbReference type="PANTHER" id="PTHR19376:SF54">
    <property type="entry name" value="DNA-DIRECTED RNA POLYMERASE SUBUNIT BETA"/>
    <property type="match status" value="1"/>
</dbReference>
<dbReference type="Pfam" id="PF04997">
    <property type="entry name" value="RNA_pol_Rpb1_1"/>
    <property type="match status" value="1"/>
</dbReference>
<dbReference type="Pfam" id="PF00623">
    <property type="entry name" value="RNA_pol_Rpb1_2"/>
    <property type="match status" value="2"/>
</dbReference>
<dbReference type="Pfam" id="PF04983">
    <property type="entry name" value="RNA_pol_Rpb1_3"/>
    <property type="match status" value="1"/>
</dbReference>
<dbReference type="Pfam" id="PF05000">
    <property type="entry name" value="RNA_pol_Rpb1_4"/>
    <property type="match status" value="1"/>
</dbReference>
<dbReference type="Pfam" id="PF04998">
    <property type="entry name" value="RNA_pol_Rpb1_5"/>
    <property type="match status" value="1"/>
</dbReference>
<dbReference type="SMART" id="SM00663">
    <property type="entry name" value="RPOLA_N"/>
    <property type="match status" value="1"/>
</dbReference>
<dbReference type="SUPFAM" id="SSF64484">
    <property type="entry name" value="beta and beta-prime subunits of DNA dependent RNA-polymerase"/>
    <property type="match status" value="1"/>
</dbReference>
<reference key="1">
    <citation type="submission" date="2007-11" db="EMBL/GenBank/DDBJ databases">
        <title>Complete sequence of chromosome of Shewanella baltica OS195.</title>
        <authorList>
            <consortium name="US DOE Joint Genome Institute"/>
            <person name="Copeland A."/>
            <person name="Lucas S."/>
            <person name="Lapidus A."/>
            <person name="Barry K."/>
            <person name="Glavina del Rio T."/>
            <person name="Dalin E."/>
            <person name="Tice H."/>
            <person name="Pitluck S."/>
            <person name="Chain P."/>
            <person name="Malfatti S."/>
            <person name="Shin M."/>
            <person name="Vergez L."/>
            <person name="Schmutz J."/>
            <person name="Larimer F."/>
            <person name="Land M."/>
            <person name="Hauser L."/>
            <person name="Kyrpides N."/>
            <person name="Kim E."/>
            <person name="Brettar I."/>
            <person name="Rodrigues J."/>
            <person name="Konstantinidis K."/>
            <person name="Klappenbach J."/>
            <person name="Hofle M."/>
            <person name="Tiedje J."/>
            <person name="Richardson P."/>
        </authorList>
    </citation>
    <scope>NUCLEOTIDE SEQUENCE [LARGE SCALE GENOMIC DNA]</scope>
    <source>
        <strain>OS195</strain>
    </source>
</reference>
<proteinExistence type="inferred from homology"/>
<organism>
    <name type="scientific">Shewanella baltica (strain OS195)</name>
    <dbReference type="NCBI Taxonomy" id="399599"/>
    <lineage>
        <taxon>Bacteria</taxon>
        <taxon>Pseudomonadati</taxon>
        <taxon>Pseudomonadota</taxon>
        <taxon>Gammaproteobacteria</taxon>
        <taxon>Alteromonadales</taxon>
        <taxon>Shewanellaceae</taxon>
        <taxon>Shewanella</taxon>
    </lineage>
</organism>
<sequence length="1405" mass="155316">MKDLLKFLKQQSKTEEFNGIKIGLASPDLIRSWSFGEVKKPETINYRTFKPEREGLFCARIFGPVKDYECLCGKYKRLKHRGVICEKCGVEVTQTKVRRERMGHIELASPVAHIWFLKSLPSRIGLMLDMTLRDIERVLYFESFVVIEPGMTSLERGQMLTEETYLDALEEYGDEFEAKMGAEAVLELLRAIDLAKEIEQMREELPSINSETRRKKVTKRLKLMEAFYTSGNKPEWMILKVLPVLPPDLRPLVPLDGGRFATSDLNDLYRRVINRNNRLKRLLDLAAPDIIVRNEKRMLQESVDALLDNGRRGRAITGSNKRPLKSLADMIKGKQGRFRQNLLGKRVDYSGRSVITVGPTLRLHQCGLPKKMALELFKPFIYGKLEGRGLATTIKAAKKMVEREVAEVWDVLDEVIREHPVMLNRAPTLHRLGIQAFEPVLIEGKAIQLHPLVCAAYNADFDGDQMAVHVPLTLEAQLEARALMMSTNNILSPANGEPVITPSQDVVLGLYYTSRERINGRGEGMAFMSVAEVEKAYATGAAELHARVKVRITETIIGDTGERTEQRRIVDTTVGRALLSLILPAGLSFDLVNQNMGKKQISKLLNTCYRQLGLKDTVIFADQLMYTGFRFATISGASVGIDDMVIPDEKYTLVADAEAEVLEIQEQFQSGLVTAGERYNKVIDIWASANEKVSKAMMENLSTETVINRDGVEEKQASFNSIYMMADSGARGSAAQIRQLAGMRGLMAKPDGSIIETPITANFREGLNVLQYFISTHGARKGLADTALKTANSGYLTRRLVDVAQDLVVIEDDCGTHEGLTMKPLIEGGDVVEPLRERVLGRVVALDVFYPGTEDVLAPRNTLLDEAWCDKLEEYSIDEVIVRSVISCDTDFGVCAACYGRDLARGHIINHGEAIGVVAAQSIGEPGTQLTMRTFHIGGAASRASAENNVQVKNSGSLKLHNAKHVTNSDGKLVIVSRSSELAVIDELGREKERYKVPYGTVLEKLEEAAVEAGDVIANWDPHTHPIISEVAGSIKFVDMIDGVTMTRQTDELTGLSSIVILDVGQRGTAGKEMRPMIRLLGANGADLMIPGTEVPAQYFLPGSAIVNLEDNAQINVGDALARIPQESSKTRDITGGLPRVADLFEARKPKEPAILAEISGTISFGKETKGKRRLVITPADGGDHYEEMIPKWRNLNVFEGEKVERGEVIADGPEAAHDILRLRGIHNVANYIVNEVQDVYRLQGVKINDKHIEVIIRQMLRKCLITSAGDTDFLEGEQAEVSRVKIANRELIAQGKVPATFERELLGITKASLATESFISAASFQETTRVLTEAAVGGKSDQLRGLKENVIVGRLIPAGTGYAYHKTRNEARAKKNEPVVVNKITASEAEQNLADLLNLAGSQD</sequence>
<gene>
    <name evidence="1" type="primary">rpoC</name>
    <name type="ordered locus">Sbal195_0194</name>
</gene>
<keyword id="KW-0240">DNA-directed RNA polymerase</keyword>
<keyword id="KW-0460">Magnesium</keyword>
<keyword id="KW-0479">Metal-binding</keyword>
<keyword id="KW-0548">Nucleotidyltransferase</keyword>
<keyword id="KW-0804">Transcription</keyword>
<keyword id="KW-0808">Transferase</keyword>
<keyword id="KW-0862">Zinc</keyword>